<organism>
    <name type="scientific">Acinetobacter baumannii (strain AB307-0294)</name>
    <dbReference type="NCBI Taxonomy" id="557600"/>
    <lineage>
        <taxon>Bacteria</taxon>
        <taxon>Pseudomonadati</taxon>
        <taxon>Pseudomonadota</taxon>
        <taxon>Gammaproteobacteria</taxon>
        <taxon>Moraxellales</taxon>
        <taxon>Moraxellaceae</taxon>
        <taxon>Acinetobacter</taxon>
        <taxon>Acinetobacter calcoaceticus/baumannii complex</taxon>
    </lineage>
</organism>
<dbReference type="EC" id="3.4.11.1" evidence="1"/>
<dbReference type="EC" id="3.4.11.10" evidence="1"/>
<dbReference type="EMBL" id="CP001172">
    <property type="protein sequence ID" value="ACJ58036.1"/>
    <property type="molecule type" value="Genomic_DNA"/>
</dbReference>
<dbReference type="RefSeq" id="WP_000673449.1">
    <property type="nucleotide sequence ID" value="NZ_CP001172.1"/>
</dbReference>
<dbReference type="SMR" id="B7H1P9"/>
<dbReference type="MEROPS" id="M17.003"/>
<dbReference type="HOGENOM" id="CLU_013734_2_2_6"/>
<dbReference type="Proteomes" id="UP000006924">
    <property type="component" value="Chromosome"/>
</dbReference>
<dbReference type="GO" id="GO:0005737">
    <property type="term" value="C:cytoplasm"/>
    <property type="evidence" value="ECO:0007669"/>
    <property type="project" value="UniProtKB-SubCell"/>
</dbReference>
<dbReference type="GO" id="GO:0030145">
    <property type="term" value="F:manganese ion binding"/>
    <property type="evidence" value="ECO:0007669"/>
    <property type="project" value="UniProtKB-UniRule"/>
</dbReference>
<dbReference type="GO" id="GO:0070006">
    <property type="term" value="F:metalloaminopeptidase activity"/>
    <property type="evidence" value="ECO:0007669"/>
    <property type="project" value="InterPro"/>
</dbReference>
<dbReference type="GO" id="GO:0006508">
    <property type="term" value="P:proteolysis"/>
    <property type="evidence" value="ECO:0007669"/>
    <property type="project" value="UniProtKB-KW"/>
</dbReference>
<dbReference type="CDD" id="cd00433">
    <property type="entry name" value="Peptidase_M17"/>
    <property type="match status" value="1"/>
</dbReference>
<dbReference type="FunFam" id="3.40.630.10:FF:000004">
    <property type="entry name" value="Probable cytosol aminopeptidase"/>
    <property type="match status" value="1"/>
</dbReference>
<dbReference type="Gene3D" id="3.40.220.10">
    <property type="entry name" value="Leucine Aminopeptidase, subunit E, domain 1"/>
    <property type="match status" value="1"/>
</dbReference>
<dbReference type="Gene3D" id="3.40.630.10">
    <property type="entry name" value="Zn peptidases"/>
    <property type="match status" value="1"/>
</dbReference>
<dbReference type="HAMAP" id="MF_00181">
    <property type="entry name" value="Cytosol_peptidase_M17"/>
    <property type="match status" value="1"/>
</dbReference>
<dbReference type="InterPro" id="IPR011356">
    <property type="entry name" value="Leucine_aapep/pepB"/>
</dbReference>
<dbReference type="InterPro" id="IPR043472">
    <property type="entry name" value="Macro_dom-like"/>
</dbReference>
<dbReference type="InterPro" id="IPR000819">
    <property type="entry name" value="Peptidase_M17_C"/>
</dbReference>
<dbReference type="InterPro" id="IPR023042">
    <property type="entry name" value="Peptidase_M17_leu_NH2_pept"/>
</dbReference>
<dbReference type="InterPro" id="IPR008283">
    <property type="entry name" value="Peptidase_M17_N"/>
</dbReference>
<dbReference type="NCBIfam" id="NF002074">
    <property type="entry name" value="PRK00913.1-4"/>
    <property type="match status" value="1"/>
</dbReference>
<dbReference type="PANTHER" id="PTHR11963:SF23">
    <property type="entry name" value="CYTOSOL AMINOPEPTIDASE"/>
    <property type="match status" value="1"/>
</dbReference>
<dbReference type="PANTHER" id="PTHR11963">
    <property type="entry name" value="LEUCINE AMINOPEPTIDASE-RELATED"/>
    <property type="match status" value="1"/>
</dbReference>
<dbReference type="Pfam" id="PF00883">
    <property type="entry name" value="Peptidase_M17"/>
    <property type="match status" value="1"/>
</dbReference>
<dbReference type="Pfam" id="PF02789">
    <property type="entry name" value="Peptidase_M17_N"/>
    <property type="match status" value="1"/>
</dbReference>
<dbReference type="PRINTS" id="PR00481">
    <property type="entry name" value="LAMNOPPTDASE"/>
</dbReference>
<dbReference type="SUPFAM" id="SSF52949">
    <property type="entry name" value="Macro domain-like"/>
    <property type="match status" value="1"/>
</dbReference>
<dbReference type="SUPFAM" id="SSF53187">
    <property type="entry name" value="Zn-dependent exopeptidases"/>
    <property type="match status" value="1"/>
</dbReference>
<dbReference type="PROSITE" id="PS00631">
    <property type="entry name" value="CYTOSOL_AP"/>
    <property type="match status" value="1"/>
</dbReference>
<sequence>MKFTTYTTFPEQTSNESLWILVDSEQLQSNLNTYQINNLESILTATQFKANFNETLPLFGQLSTQPHSQLLGLGKAAELQAAKLAKLAQTIIKSAQNKFKHIAIDIAALPVEYHYLFALSLTQAAYGYDEFKSKKNEFVLQQVDLISSQTSLDENQLALVHAVQSGQSYARDLGNRPGNICFPEYLAEQALALAAEFPDLLKVTVLNEQQMADLGMYAFLAVSKGSERPGRIVTLEYQAQLEQAPVVLVGKGVTFDTGGISLKPGLGMDEMKFDMCGAASVLGTIRALCEARLPIHVVGAIAAAENMPSGKATRPGDIVTTMSGQTVEILNTDAEGRLVLCDTLTYIKRFNPAVVIDIATLTGACVVALGKVLSGLFSPDDTLAAELQQAGEQSFDRVWRMPVIDDYQELLDSPFADIANIGGPHGGAITAACFLERFTRDYRWAHLDVAGTAWLSGSAKGATGRPVPLLMQFLANRVSTNG</sequence>
<gene>
    <name evidence="1" type="primary">pepA</name>
    <name type="ordered locus">ABBFA_003304</name>
</gene>
<evidence type="ECO:0000255" key="1">
    <source>
        <dbReference type="HAMAP-Rule" id="MF_00181"/>
    </source>
</evidence>
<protein>
    <recommendedName>
        <fullName evidence="1">Probable cytosol aminopeptidase</fullName>
        <ecNumber evidence="1">3.4.11.1</ecNumber>
    </recommendedName>
    <alternativeName>
        <fullName evidence="1">Leucine aminopeptidase</fullName>
        <shortName evidence="1">LAP</shortName>
        <ecNumber evidence="1">3.4.11.10</ecNumber>
    </alternativeName>
    <alternativeName>
        <fullName evidence="1">Leucyl aminopeptidase</fullName>
    </alternativeName>
</protein>
<name>AMPA_ACIB3</name>
<reference key="1">
    <citation type="journal article" date="2008" name="J. Bacteriol.">
        <title>Comparative genome sequence analysis of multidrug-resistant Acinetobacter baumannii.</title>
        <authorList>
            <person name="Adams M.D."/>
            <person name="Goglin K."/>
            <person name="Molyneaux N."/>
            <person name="Hujer K.M."/>
            <person name="Lavender H."/>
            <person name="Jamison J.J."/>
            <person name="MacDonald I.J."/>
            <person name="Martin K.M."/>
            <person name="Russo T."/>
            <person name="Campagnari A.A."/>
            <person name="Hujer A.M."/>
            <person name="Bonomo R.A."/>
            <person name="Gill S.R."/>
        </authorList>
    </citation>
    <scope>NUCLEOTIDE SEQUENCE [LARGE SCALE GENOMIC DNA]</scope>
    <source>
        <strain>AB307-0294</strain>
    </source>
</reference>
<accession>B7H1P9</accession>
<comment type="function">
    <text evidence="1">Presumably involved in the processing and regular turnover of intracellular proteins. Catalyzes the removal of unsubstituted N-terminal amino acids from various peptides.</text>
</comment>
<comment type="catalytic activity">
    <reaction evidence="1">
        <text>Release of an N-terminal amino acid, Xaa-|-Yaa-, in which Xaa is preferably Leu, but may be other amino acids including Pro although not Arg or Lys, and Yaa may be Pro. Amino acid amides and methyl esters are also readily hydrolyzed, but rates on arylamides are exceedingly low.</text>
        <dbReference type="EC" id="3.4.11.1"/>
    </reaction>
</comment>
<comment type="catalytic activity">
    <reaction evidence="1">
        <text>Release of an N-terminal amino acid, preferentially leucine, but not glutamic or aspartic acids.</text>
        <dbReference type="EC" id="3.4.11.10"/>
    </reaction>
</comment>
<comment type="cofactor">
    <cofactor evidence="1">
        <name>Mn(2+)</name>
        <dbReference type="ChEBI" id="CHEBI:29035"/>
    </cofactor>
    <text evidence="1">Binds 2 manganese ions per subunit.</text>
</comment>
<comment type="subcellular location">
    <subcellularLocation>
        <location evidence="1">Cytoplasm</location>
    </subcellularLocation>
</comment>
<comment type="similarity">
    <text evidence="1">Belongs to the peptidase M17 family.</text>
</comment>
<keyword id="KW-0031">Aminopeptidase</keyword>
<keyword id="KW-0963">Cytoplasm</keyword>
<keyword id="KW-0378">Hydrolase</keyword>
<keyword id="KW-0464">Manganese</keyword>
<keyword id="KW-0479">Metal-binding</keyword>
<keyword id="KW-0645">Protease</keyword>
<feature type="chain" id="PRO_1000118442" description="Probable cytosol aminopeptidase">
    <location>
        <begin position="1"/>
        <end position="482"/>
    </location>
</feature>
<feature type="active site" evidence="1">
    <location>
        <position position="263"/>
    </location>
</feature>
<feature type="active site" evidence="1">
    <location>
        <position position="337"/>
    </location>
</feature>
<feature type="binding site" evidence="1">
    <location>
        <position position="251"/>
    </location>
    <ligand>
        <name>Mn(2+)</name>
        <dbReference type="ChEBI" id="CHEBI:29035"/>
        <label>2</label>
    </ligand>
</feature>
<feature type="binding site" evidence="1">
    <location>
        <position position="256"/>
    </location>
    <ligand>
        <name>Mn(2+)</name>
        <dbReference type="ChEBI" id="CHEBI:29035"/>
        <label>1</label>
    </ligand>
</feature>
<feature type="binding site" evidence="1">
    <location>
        <position position="256"/>
    </location>
    <ligand>
        <name>Mn(2+)</name>
        <dbReference type="ChEBI" id="CHEBI:29035"/>
        <label>2</label>
    </ligand>
</feature>
<feature type="binding site" evidence="1">
    <location>
        <position position="274"/>
    </location>
    <ligand>
        <name>Mn(2+)</name>
        <dbReference type="ChEBI" id="CHEBI:29035"/>
        <label>2</label>
    </ligand>
</feature>
<feature type="binding site" evidence="1">
    <location>
        <position position="333"/>
    </location>
    <ligand>
        <name>Mn(2+)</name>
        <dbReference type="ChEBI" id="CHEBI:29035"/>
        <label>1</label>
    </ligand>
</feature>
<feature type="binding site" evidence="1">
    <location>
        <position position="335"/>
    </location>
    <ligand>
        <name>Mn(2+)</name>
        <dbReference type="ChEBI" id="CHEBI:29035"/>
        <label>1</label>
    </ligand>
</feature>
<feature type="binding site" evidence="1">
    <location>
        <position position="335"/>
    </location>
    <ligand>
        <name>Mn(2+)</name>
        <dbReference type="ChEBI" id="CHEBI:29035"/>
        <label>2</label>
    </ligand>
</feature>
<proteinExistence type="inferred from homology"/>